<sequence>MRIIGIETSCDETGIAIYDDEKGLLSHKLYSQVKLHADYGGVVPELASRDHVKKTIPLIKAAMAEANVTPQDLDGVAFTAGPGLVGALLVGATIGRSLAYAWDVPAVPVHHMEGHLLAPMLEENPPPFPFVALLVSGGHTMLVEVKNIGEYRILGESIDDAAGEAFDKTAKLMGLDYPGGPLLAKLAEKGTPGRFKFPRPMTDRPGLDMSFSGLKTFTANTIAANGDDEQTRADIAYAFQEAVCDTLVIKCKRALEETGLKRVVIAGGVSANKQLRADLEKLAKKIGGEVYYPRTEFCTDNGAMIAYAGMQRLKNGDVCELGLQARPRWPIDQLTSIQK</sequence>
<name>TSAD_VIBC3</name>
<proteinExistence type="inferred from homology"/>
<organism>
    <name type="scientific">Vibrio cholerae serotype O1 (strain ATCC 39541 / Classical Ogawa 395 / O395)</name>
    <dbReference type="NCBI Taxonomy" id="345073"/>
    <lineage>
        <taxon>Bacteria</taxon>
        <taxon>Pseudomonadati</taxon>
        <taxon>Pseudomonadota</taxon>
        <taxon>Gammaproteobacteria</taxon>
        <taxon>Vibrionales</taxon>
        <taxon>Vibrionaceae</taxon>
        <taxon>Vibrio</taxon>
    </lineage>
</organism>
<accession>A5F9E8</accession>
<accession>C3LX47</accession>
<gene>
    <name evidence="1" type="primary">tsaD</name>
    <name type="synonym">gcp</name>
    <name type="ordered locus">VC0395_A0049</name>
    <name type="ordered locus">VC395_0538</name>
</gene>
<feature type="chain" id="PRO_1000073526" description="tRNA N6-adenosine threonylcarbamoyltransferase">
    <location>
        <begin position="1"/>
        <end position="339"/>
    </location>
</feature>
<feature type="binding site" evidence="1">
    <location>
        <position position="111"/>
    </location>
    <ligand>
        <name>Fe cation</name>
        <dbReference type="ChEBI" id="CHEBI:24875"/>
    </ligand>
</feature>
<feature type="binding site" evidence="1">
    <location>
        <position position="115"/>
    </location>
    <ligand>
        <name>Fe cation</name>
        <dbReference type="ChEBI" id="CHEBI:24875"/>
    </ligand>
</feature>
<feature type="binding site" evidence="1">
    <location>
        <begin position="134"/>
        <end position="138"/>
    </location>
    <ligand>
        <name>substrate</name>
    </ligand>
</feature>
<feature type="binding site" evidence="1">
    <location>
        <position position="167"/>
    </location>
    <ligand>
        <name>substrate</name>
    </ligand>
</feature>
<feature type="binding site" evidence="1">
    <location>
        <position position="180"/>
    </location>
    <ligand>
        <name>substrate</name>
    </ligand>
</feature>
<feature type="binding site" evidence="1">
    <location>
        <position position="272"/>
    </location>
    <ligand>
        <name>substrate</name>
    </ligand>
</feature>
<feature type="binding site" evidence="1">
    <location>
        <position position="300"/>
    </location>
    <ligand>
        <name>Fe cation</name>
        <dbReference type="ChEBI" id="CHEBI:24875"/>
    </ligand>
</feature>
<dbReference type="EC" id="2.3.1.234" evidence="1"/>
<dbReference type="EMBL" id="CP000627">
    <property type="protein sequence ID" value="ABQ21668.1"/>
    <property type="molecule type" value="Genomic_DNA"/>
</dbReference>
<dbReference type="EMBL" id="CP001235">
    <property type="protein sequence ID" value="ACP08557.1"/>
    <property type="molecule type" value="Genomic_DNA"/>
</dbReference>
<dbReference type="RefSeq" id="WP_001220122.1">
    <property type="nucleotide sequence ID" value="NZ_JAACZH010000029.1"/>
</dbReference>
<dbReference type="SMR" id="A5F9E8"/>
<dbReference type="KEGG" id="vco:VC0395_A0049"/>
<dbReference type="KEGG" id="vcr:VC395_0538"/>
<dbReference type="PATRIC" id="fig|345073.21.peg.528"/>
<dbReference type="eggNOG" id="COG0533">
    <property type="taxonomic scope" value="Bacteria"/>
</dbReference>
<dbReference type="HOGENOM" id="CLU_023208_0_2_6"/>
<dbReference type="OrthoDB" id="9806197at2"/>
<dbReference type="Proteomes" id="UP000000249">
    <property type="component" value="Chromosome 2"/>
</dbReference>
<dbReference type="GO" id="GO:0005737">
    <property type="term" value="C:cytoplasm"/>
    <property type="evidence" value="ECO:0007669"/>
    <property type="project" value="UniProtKB-SubCell"/>
</dbReference>
<dbReference type="GO" id="GO:0005506">
    <property type="term" value="F:iron ion binding"/>
    <property type="evidence" value="ECO:0007669"/>
    <property type="project" value="UniProtKB-UniRule"/>
</dbReference>
<dbReference type="GO" id="GO:0061711">
    <property type="term" value="F:N(6)-L-threonylcarbamoyladenine synthase activity"/>
    <property type="evidence" value="ECO:0007669"/>
    <property type="project" value="UniProtKB-EC"/>
</dbReference>
<dbReference type="GO" id="GO:0002949">
    <property type="term" value="P:tRNA threonylcarbamoyladenosine modification"/>
    <property type="evidence" value="ECO:0007669"/>
    <property type="project" value="UniProtKB-UniRule"/>
</dbReference>
<dbReference type="CDD" id="cd24133">
    <property type="entry name" value="ASKHA_NBD_TsaD_bac"/>
    <property type="match status" value="1"/>
</dbReference>
<dbReference type="FunFam" id="3.30.420.40:FF:000031">
    <property type="entry name" value="tRNA N6-adenosine threonylcarbamoyltransferase"/>
    <property type="match status" value="1"/>
</dbReference>
<dbReference type="Gene3D" id="3.30.420.40">
    <property type="match status" value="2"/>
</dbReference>
<dbReference type="HAMAP" id="MF_01445">
    <property type="entry name" value="TsaD"/>
    <property type="match status" value="1"/>
</dbReference>
<dbReference type="InterPro" id="IPR043129">
    <property type="entry name" value="ATPase_NBD"/>
</dbReference>
<dbReference type="InterPro" id="IPR000905">
    <property type="entry name" value="Gcp-like_dom"/>
</dbReference>
<dbReference type="InterPro" id="IPR017861">
    <property type="entry name" value="KAE1/TsaD"/>
</dbReference>
<dbReference type="InterPro" id="IPR017860">
    <property type="entry name" value="Peptidase_M22_CS"/>
</dbReference>
<dbReference type="InterPro" id="IPR022450">
    <property type="entry name" value="TsaD"/>
</dbReference>
<dbReference type="NCBIfam" id="TIGR00329">
    <property type="entry name" value="gcp_kae1"/>
    <property type="match status" value="1"/>
</dbReference>
<dbReference type="NCBIfam" id="TIGR03723">
    <property type="entry name" value="T6A_TsaD_YgjD"/>
    <property type="match status" value="1"/>
</dbReference>
<dbReference type="PANTHER" id="PTHR11735">
    <property type="entry name" value="TRNA N6-ADENOSINE THREONYLCARBAMOYLTRANSFERASE"/>
    <property type="match status" value="1"/>
</dbReference>
<dbReference type="PANTHER" id="PTHR11735:SF6">
    <property type="entry name" value="TRNA N6-ADENOSINE THREONYLCARBAMOYLTRANSFERASE, MITOCHONDRIAL"/>
    <property type="match status" value="1"/>
</dbReference>
<dbReference type="Pfam" id="PF00814">
    <property type="entry name" value="TsaD"/>
    <property type="match status" value="1"/>
</dbReference>
<dbReference type="PRINTS" id="PR00789">
    <property type="entry name" value="OSIALOPTASE"/>
</dbReference>
<dbReference type="SUPFAM" id="SSF53067">
    <property type="entry name" value="Actin-like ATPase domain"/>
    <property type="match status" value="2"/>
</dbReference>
<dbReference type="PROSITE" id="PS01016">
    <property type="entry name" value="GLYCOPROTEASE"/>
    <property type="match status" value="1"/>
</dbReference>
<evidence type="ECO:0000255" key="1">
    <source>
        <dbReference type="HAMAP-Rule" id="MF_01445"/>
    </source>
</evidence>
<keyword id="KW-0012">Acyltransferase</keyword>
<keyword id="KW-0963">Cytoplasm</keyword>
<keyword id="KW-0408">Iron</keyword>
<keyword id="KW-0479">Metal-binding</keyword>
<keyword id="KW-0808">Transferase</keyword>
<keyword id="KW-0819">tRNA processing</keyword>
<reference key="1">
    <citation type="submission" date="2007-03" db="EMBL/GenBank/DDBJ databases">
        <authorList>
            <person name="Heidelberg J."/>
        </authorList>
    </citation>
    <scope>NUCLEOTIDE SEQUENCE [LARGE SCALE GENOMIC DNA]</scope>
    <source>
        <strain>ATCC 39541 / Classical Ogawa 395 / O395</strain>
    </source>
</reference>
<reference key="2">
    <citation type="journal article" date="2008" name="PLoS ONE">
        <title>A recalibrated molecular clock and independent origins for the cholera pandemic clones.</title>
        <authorList>
            <person name="Feng L."/>
            <person name="Reeves P.R."/>
            <person name="Lan R."/>
            <person name="Ren Y."/>
            <person name="Gao C."/>
            <person name="Zhou Z."/>
            <person name="Ren Y."/>
            <person name="Cheng J."/>
            <person name="Wang W."/>
            <person name="Wang J."/>
            <person name="Qian W."/>
            <person name="Li D."/>
            <person name="Wang L."/>
        </authorList>
    </citation>
    <scope>NUCLEOTIDE SEQUENCE [LARGE SCALE GENOMIC DNA]</scope>
    <source>
        <strain>ATCC 39541 / Classical Ogawa 395 / O395</strain>
    </source>
</reference>
<comment type="function">
    <text evidence="1">Required for the formation of a threonylcarbamoyl group on adenosine at position 37 (t(6)A37) in tRNAs that read codons beginning with adenine. Is involved in the transfer of the threonylcarbamoyl moiety of threonylcarbamoyl-AMP (TC-AMP) to the N6 group of A37, together with TsaE and TsaB. TsaD likely plays a direct catalytic role in this reaction.</text>
</comment>
<comment type="catalytic activity">
    <reaction evidence="1">
        <text>L-threonylcarbamoyladenylate + adenosine(37) in tRNA = N(6)-L-threonylcarbamoyladenosine(37) in tRNA + AMP + H(+)</text>
        <dbReference type="Rhea" id="RHEA:37059"/>
        <dbReference type="Rhea" id="RHEA-COMP:10162"/>
        <dbReference type="Rhea" id="RHEA-COMP:10163"/>
        <dbReference type="ChEBI" id="CHEBI:15378"/>
        <dbReference type="ChEBI" id="CHEBI:73682"/>
        <dbReference type="ChEBI" id="CHEBI:74411"/>
        <dbReference type="ChEBI" id="CHEBI:74418"/>
        <dbReference type="ChEBI" id="CHEBI:456215"/>
        <dbReference type="EC" id="2.3.1.234"/>
    </reaction>
</comment>
<comment type="cofactor">
    <cofactor evidence="1">
        <name>Fe(2+)</name>
        <dbReference type="ChEBI" id="CHEBI:29033"/>
    </cofactor>
    <text evidence="1">Binds 1 Fe(2+) ion per subunit.</text>
</comment>
<comment type="subcellular location">
    <subcellularLocation>
        <location evidence="1">Cytoplasm</location>
    </subcellularLocation>
</comment>
<comment type="similarity">
    <text evidence="1">Belongs to the KAE1 / TsaD family.</text>
</comment>
<protein>
    <recommendedName>
        <fullName evidence="1">tRNA N6-adenosine threonylcarbamoyltransferase</fullName>
        <ecNumber evidence="1">2.3.1.234</ecNumber>
    </recommendedName>
    <alternativeName>
        <fullName evidence="1">N6-L-threonylcarbamoyladenine synthase</fullName>
        <shortName evidence="1">t(6)A synthase</shortName>
    </alternativeName>
    <alternativeName>
        <fullName evidence="1">t(6)A37 threonylcarbamoyladenosine biosynthesis protein TsaD</fullName>
    </alternativeName>
    <alternativeName>
        <fullName evidence="1">tRNA threonylcarbamoyladenosine biosynthesis protein TsaD</fullName>
    </alternativeName>
</protein>